<sequence>MDLKDYIRTVPDFPEPGILFRDITTLLHEPKALRYTIDSLAEQTGSLGADYVVGIESRGFMFGTPLAIKLDCGFVPVRKPGKLPAAVFKEEYTLEYGKNALEIHQDAFAAPSRVLVVDDLLATGGTAVAAAQLVERAGGTVVGFGFIIELTFLNGRAKLPEGPSAVALVSY</sequence>
<evidence type="ECO:0000255" key="1">
    <source>
        <dbReference type="HAMAP-Rule" id="MF_00004"/>
    </source>
</evidence>
<gene>
    <name evidence="1" type="primary">apt</name>
    <name type="ordered locus">glr2747</name>
</gene>
<accession>Q7NGZ0</accession>
<comment type="function">
    <text evidence="1">Catalyzes a salvage reaction resulting in the formation of AMP, that is energically less costly than de novo synthesis.</text>
</comment>
<comment type="catalytic activity">
    <reaction evidence="1">
        <text>AMP + diphosphate = 5-phospho-alpha-D-ribose 1-diphosphate + adenine</text>
        <dbReference type="Rhea" id="RHEA:16609"/>
        <dbReference type="ChEBI" id="CHEBI:16708"/>
        <dbReference type="ChEBI" id="CHEBI:33019"/>
        <dbReference type="ChEBI" id="CHEBI:58017"/>
        <dbReference type="ChEBI" id="CHEBI:456215"/>
        <dbReference type="EC" id="2.4.2.7"/>
    </reaction>
</comment>
<comment type="pathway">
    <text evidence="1">Purine metabolism; AMP biosynthesis via salvage pathway; AMP from adenine: step 1/1.</text>
</comment>
<comment type="subunit">
    <text evidence="1">Homodimer.</text>
</comment>
<comment type="subcellular location">
    <subcellularLocation>
        <location evidence="1">Cytoplasm</location>
    </subcellularLocation>
</comment>
<comment type="similarity">
    <text evidence="1">Belongs to the purine/pyrimidine phosphoribosyltransferase family.</text>
</comment>
<keyword id="KW-0963">Cytoplasm</keyword>
<keyword id="KW-0328">Glycosyltransferase</keyword>
<keyword id="KW-0660">Purine salvage</keyword>
<keyword id="KW-1185">Reference proteome</keyword>
<keyword id="KW-0808">Transferase</keyword>
<organism>
    <name type="scientific">Gloeobacter violaceus (strain ATCC 29082 / PCC 7421)</name>
    <dbReference type="NCBI Taxonomy" id="251221"/>
    <lineage>
        <taxon>Bacteria</taxon>
        <taxon>Bacillati</taxon>
        <taxon>Cyanobacteriota</taxon>
        <taxon>Cyanophyceae</taxon>
        <taxon>Gloeobacterales</taxon>
        <taxon>Gloeobacteraceae</taxon>
        <taxon>Gloeobacter</taxon>
    </lineage>
</organism>
<feature type="chain" id="PRO_0000149388" description="Adenine phosphoribosyltransferase">
    <location>
        <begin position="1"/>
        <end position="171"/>
    </location>
</feature>
<proteinExistence type="inferred from homology"/>
<reference key="1">
    <citation type="journal article" date="2003" name="DNA Res.">
        <title>Complete genome structure of Gloeobacter violaceus PCC 7421, a cyanobacterium that lacks thylakoids.</title>
        <authorList>
            <person name="Nakamura Y."/>
            <person name="Kaneko T."/>
            <person name="Sato S."/>
            <person name="Mimuro M."/>
            <person name="Miyashita H."/>
            <person name="Tsuchiya T."/>
            <person name="Sasamoto S."/>
            <person name="Watanabe A."/>
            <person name="Kawashima K."/>
            <person name="Kishida Y."/>
            <person name="Kiyokawa C."/>
            <person name="Kohara M."/>
            <person name="Matsumoto M."/>
            <person name="Matsuno A."/>
            <person name="Nakazaki N."/>
            <person name="Shimpo S."/>
            <person name="Takeuchi C."/>
            <person name="Yamada M."/>
            <person name="Tabata S."/>
        </authorList>
    </citation>
    <scope>NUCLEOTIDE SEQUENCE [LARGE SCALE GENOMIC DNA]</scope>
    <source>
        <strain>ATCC 29082 / PCC 7421</strain>
    </source>
</reference>
<dbReference type="EC" id="2.4.2.7" evidence="1"/>
<dbReference type="EMBL" id="BA000045">
    <property type="protein sequence ID" value="BAC90688.1"/>
    <property type="molecule type" value="Genomic_DNA"/>
</dbReference>
<dbReference type="RefSeq" id="NP_925693.1">
    <property type="nucleotide sequence ID" value="NC_005125.1"/>
</dbReference>
<dbReference type="RefSeq" id="WP_011142741.1">
    <property type="nucleotide sequence ID" value="NC_005125.1"/>
</dbReference>
<dbReference type="SMR" id="Q7NGZ0"/>
<dbReference type="FunCoup" id="Q7NGZ0">
    <property type="interactions" value="228"/>
</dbReference>
<dbReference type="STRING" id="251221.gene:10760250"/>
<dbReference type="EnsemblBacteria" id="BAC90688">
    <property type="protein sequence ID" value="BAC90688"/>
    <property type="gene ID" value="BAC90688"/>
</dbReference>
<dbReference type="KEGG" id="gvi:glr2747"/>
<dbReference type="PATRIC" id="fig|251221.4.peg.2774"/>
<dbReference type="eggNOG" id="COG0503">
    <property type="taxonomic scope" value="Bacteria"/>
</dbReference>
<dbReference type="HOGENOM" id="CLU_063339_3_0_3"/>
<dbReference type="InParanoid" id="Q7NGZ0"/>
<dbReference type="OrthoDB" id="9803963at2"/>
<dbReference type="PhylomeDB" id="Q7NGZ0"/>
<dbReference type="UniPathway" id="UPA00588">
    <property type="reaction ID" value="UER00646"/>
</dbReference>
<dbReference type="Proteomes" id="UP000000557">
    <property type="component" value="Chromosome"/>
</dbReference>
<dbReference type="GO" id="GO:0005737">
    <property type="term" value="C:cytoplasm"/>
    <property type="evidence" value="ECO:0000318"/>
    <property type="project" value="GO_Central"/>
</dbReference>
<dbReference type="GO" id="GO:0002055">
    <property type="term" value="F:adenine binding"/>
    <property type="evidence" value="ECO:0000318"/>
    <property type="project" value="GO_Central"/>
</dbReference>
<dbReference type="GO" id="GO:0003999">
    <property type="term" value="F:adenine phosphoribosyltransferase activity"/>
    <property type="evidence" value="ECO:0000318"/>
    <property type="project" value="GO_Central"/>
</dbReference>
<dbReference type="GO" id="GO:0016208">
    <property type="term" value="F:AMP binding"/>
    <property type="evidence" value="ECO:0000318"/>
    <property type="project" value="GO_Central"/>
</dbReference>
<dbReference type="GO" id="GO:0006168">
    <property type="term" value="P:adenine salvage"/>
    <property type="evidence" value="ECO:0000318"/>
    <property type="project" value="GO_Central"/>
</dbReference>
<dbReference type="GO" id="GO:0044209">
    <property type="term" value="P:AMP salvage"/>
    <property type="evidence" value="ECO:0000318"/>
    <property type="project" value="GO_Central"/>
</dbReference>
<dbReference type="GO" id="GO:0006166">
    <property type="term" value="P:purine ribonucleoside salvage"/>
    <property type="evidence" value="ECO:0007669"/>
    <property type="project" value="UniProtKB-KW"/>
</dbReference>
<dbReference type="CDD" id="cd06223">
    <property type="entry name" value="PRTases_typeI"/>
    <property type="match status" value="1"/>
</dbReference>
<dbReference type="FunFam" id="3.40.50.2020:FF:000004">
    <property type="entry name" value="Adenine phosphoribosyltransferase"/>
    <property type="match status" value="1"/>
</dbReference>
<dbReference type="Gene3D" id="3.40.50.2020">
    <property type="match status" value="1"/>
</dbReference>
<dbReference type="HAMAP" id="MF_00004">
    <property type="entry name" value="Aden_phosphoribosyltr"/>
    <property type="match status" value="1"/>
</dbReference>
<dbReference type="InterPro" id="IPR005764">
    <property type="entry name" value="Ade_phspho_trans"/>
</dbReference>
<dbReference type="InterPro" id="IPR000836">
    <property type="entry name" value="PRibTrfase_dom"/>
</dbReference>
<dbReference type="InterPro" id="IPR029057">
    <property type="entry name" value="PRTase-like"/>
</dbReference>
<dbReference type="InterPro" id="IPR050054">
    <property type="entry name" value="UPRTase/APRTase"/>
</dbReference>
<dbReference type="NCBIfam" id="TIGR01090">
    <property type="entry name" value="apt"/>
    <property type="match status" value="1"/>
</dbReference>
<dbReference type="NCBIfam" id="NF002634">
    <property type="entry name" value="PRK02304.1-3"/>
    <property type="match status" value="1"/>
</dbReference>
<dbReference type="NCBIfam" id="NF002636">
    <property type="entry name" value="PRK02304.1-5"/>
    <property type="match status" value="1"/>
</dbReference>
<dbReference type="PANTHER" id="PTHR32315">
    <property type="entry name" value="ADENINE PHOSPHORIBOSYLTRANSFERASE"/>
    <property type="match status" value="1"/>
</dbReference>
<dbReference type="PANTHER" id="PTHR32315:SF3">
    <property type="entry name" value="ADENINE PHOSPHORIBOSYLTRANSFERASE"/>
    <property type="match status" value="1"/>
</dbReference>
<dbReference type="Pfam" id="PF00156">
    <property type="entry name" value="Pribosyltran"/>
    <property type="match status" value="1"/>
</dbReference>
<dbReference type="SUPFAM" id="SSF53271">
    <property type="entry name" value="PRTase-like"/>
    <property type="match status" value="1"/>
</dbReference>
<dbReference type="PROSITE" id="PS00103">
    <property type="entry name" value="PUR_PYR_PR_TRANSFER"/>
    <property type="match status" value="1"/>
</dbReference>
<name>APT_GLOVI</name>
<protein>
    <recommendedName>
        <fullName evidence="1">Adenine phosphoribosyltransferase</fullName>
        <shortName evidence="1">APRT</shortName>
        <ecNumber evidence="1">2.4.2.7</ecNumber>
    </recommendedName>
</protein>